<accession>Q91YP1</accession>
<accession>Q9D4U5</accession>
<comment type="function">
    <text evidence="1">O-methyltransferase that specifically monomethylates 5'-monophosphate of cytoplasmic histidyl tRNA (tRNA(His)), acting as a capping enzyme by protecting tRNA(His) from cleavage by DICER1. Also able, with less efficiently, to methylate the 5' monophosphate of a subset of pre-miRNAs, acting as a negative regulator of miRNA processing. The 5' monophosphate of pre-miRNAs is recognized by DICER1 and is required for pre-miRNAs processing: methylation at this position reduces the processing of pre-miRNAs by DICER1. Was also reported to mediate dimethylation of pre-miR-145; however dimethylation cannot be reproduced by another group which observes a monomethylation of pre-miR-145.</text>
</comment>
<comment type="catalytic activity">
    <reaction evidence="1">
        <text>a 5'-end 5'-phospho-ribonucleoside-RNA + S-adenosyl-L-methionine = a 5'-end (5'-methylphospho)-ribonucleoside-RNA + S-adenosyl-L-homocysteine</text>
        <dbReference type="Rhea" id="RHEA:58656"/>
        <dbReference type="Rhea" id="RHEA-COMP:15179"/>
        <dbReference type="Rhea" id="RHEA-COMP:15181"/>
        <dbReference type="ChEBI" id="CHEBI:57856"/>
        <dbReference type="ChEBI" id="CHEBI:59789"/>
        <dbReference type="ChEBI" id="CHEBI:138282"/>
        <dbReference type="ChEBI" id="CHEBI:142776"/>
    </reaction>
</comment>
<comment type="catalytic activity">
    <reaction evidence="1">
        <text>a 5'-end 5'-phospho-ribonucleoside-RNA + 2 S-adenosyl-L-methionine = a 5'-end (5'-bismethylphospho)-ribonucleoside-RNA + 2 S-adenosyl-L-homocysteine</text>
        <dbReference type="Rhea" id="RHEA:58640"/>
        <dbReference type="Rhea" id="RHEA-COMP:15179"/>
        <dbReference type="Rhea" id="RHEA-COMP:15182"/>
        <dbReference type="ChEBI" id="CHEBI:57856"/>
        <dbReference type="ChEBI" id="CHEBI:59789"/>
        <dbReference type="ChEBI" id="CHEBI:138282"/>
        <dbReference type="ChEBI" id="CHEBI:142777"/>
    </reaction>
</comment>
<comment type="subunit">
    <text evidence="1">Interacts with DICER1; the interaction may be mediated by RNA.</text>
</comment>
<comment type="subcellular location">
    <subcellularLocation>
        <location evidence="1">Cytoplasm</location>
    </subcellularLocation>
</comment>
<comment type="similarity">
    <text evidence="3">Belongs to the methyltransferase superfamily.</text>
</comment>
<organism>
    <name type="scientific">Mus musculus</name>
    <name type="common">Mouse</name>
    <dbReference type="NCBI Taxonomy" id="10090"/>
    <lineage>
        <taxon>Eukaryota</taxon>
        <taxon>Metazoa</taxon>
        <taxon>Chordata</taxon>
        <taxon>Craniata</taxon>
        <taxon>Vertebrata</taxon>
        <taxon>Euteleostomi</taxon>
        <taxon>Mammalia</taxon>
        <taxon>Eutheria</taxon>
        <taxon>Euarchontoglires</taxon>
        <taxon>Glires</taxon>
        <taxon>Rodentia</taxon>
        <taxon>Myomorpha</taxon>
        <taxon>Muroidea</taxon>
        <taxon>Muridae</taxon>
        <taxon>Murinae</taxon>
        <taxon>Mus</taxon>
        <taxon>Mus</taxon>
    </lineage>
</organism>
<feature type="chain" id="PRO_0000289266" description="RNA 5'-monophosphate methyltransferase">
    <location>
        <begin position="1"/>
        <end position="285"/>
    </location>
</feature>
<feature type="domain" description="Bin3-type SAM" evidence="2">
    <location>
        <begin position="53"/>
        <end position="275"/>
    </location>
</feature>
<feature type="binding site" evidence="1">
    <location>
        <position position="46"/>
    </location>
    <ligand>
        <name>S-adenosyl-L-methionine</name>
        <dbReference type="ChEBI" id="CHEBI:59789"/>
    </ligand>
</feature>
<feature type="binding site" evidence="1">
    <location>
        <position position="77"/>
    </location>
    <ligand>
        <name>S-adenosyl-L-methionine</name>
        <dbReference type="ChEBI" id="CHEBI:59789"/>
    </ligand>
</feature>
<feature type="binding site" evidence="1">
    <location>
        <position position="111"/>
    </location>
    <ligand>
        <name>S-adenosyl-L-methionine</name>
        <dbReference type="ChEBI" id="CHEBI:59789"/>
    </ligand>
</feature>
<feature type="binding site" evidence="1">
    <location>
        <begin position="136"/>
        <end position="137"/>
    </location>
    <ligand>
        <name>S-adenosyl-L-methionine</name>
        <dbReference type="ChEBI" id="CHEBI:59789"/>
    </ligand>
</feature>
<feature type="binding site" evidence="1">
    <location>
        <position position="165"/>
    </location>
    <ligand>
        <name>S-adenosyl-L-methionine</name>
        <dbReference type="ChEBI" id="CHEBI:59789"/>
    </ligand>
</feature>
<feature type="sequence conflict" description="In Ref. 1; BAB30128." evidence="3" ref="1">
    <original>F</original>
    <variation>Y</variation>
    <location>
        <position position="154"/>
    </location>
</feature>
<feature type="sequence conflict" description="In Ref. 1; BAB30128." evidence="3" ref="1">
    <original>S</original>
    <variation>V</variation>
    <location>
        <position position="157"/>
    </location>
</feature>
<feature type="sequence conflict" description="In Ref. 1; BAB30128." evidence="3" ref="1">
    <original>A</original>
    <variation>G</variation>
    <location>
        <position position="185"/>
    </location>
</feature>
<feature type="sequence conflict" description="In Ref. 1; BAB30128." evidence="3" ref="1">
    <original>E</original>
    <variation>K</variation>
    <location>
        <position position="197"/>
    </location>
</feature>
<feature type="sequence conflict" description="In Ref. 1; BAB30128." evidence="3" ref="1">
    <original>A</original>
    <variation>P</variation>
    <location>
        <position position="226"/>
    </location>
</feature>
<feature type="sequence conflict" description="In Ref. 1; BAB30128." evidence="3" ref="1">
    <original>I</original>
    <variation>F</variation>
    <location>
        <position position="227"/>
    </location>
</feature>
<protein>
    <recommendedName>
        <fullName evidence="3">RNA 5'-monophosphate methyltransferase</fullName>
        <ecNumber evidence="1">2.1.1.-</ecNumber>
    </recommendedName>
    <alternativeName>
        <fullName>BCDIN3 domain-containing protein</fullName>
    </alternativeName>
</protein>
<sequence length="285" mass="32035">MAADGTLSRGGVGEAVEEEHPGALEPGAAPFGNFPHYSRFHPPEQRLRLLPPELLRQLFPPEGPEKRPILGLDVGCNSGDLSVALYKHFLSPRDGETCSGASRELRILCCDIDPVLVERAERDCPFPEALTFITLDIMDQESRKVPLSSFLSQFGRSVFDMVFCMSVTMWIHLNHGDRGLCEFLAHVSSLCSYLLVEPQPWKCYRAAARRLRKLGLHSFDHFRSLAIRGDMAKQIVRILTQDHGMELACCFGNTSWDRSLLLFRAKHTHETQAIPESSTKETRTD</sequence>
<gene>
    <name evidence="4" type="primary">Bcdin3d</name>
</gene>
<reference key="1">
    <citation type="journal article" date="2005" name="Science">
        <title>The transcriptional landscape of the mammalian genome.</title>
        <authorList>
            <person name="Carninci P."/>
            <person name="Kasukawa T."/>
            <person name="Katayama S."/>
            <person name="Gough J."/>
            <person name="Frith M.C."/>
            <person name="Maeda N."/>
            <person name="Oyama R."/>
            <person name="Ravasi T."/>
            <person name="Lenhard B."/>
            <person name="Wells C."/>
            <person name="Kodzius R."/>
            <person name="Shimokawa K."/>
            <person name="Bajic V.B."/>
            <person name="Brenner S.E."/>
            <person name="Batalov S."/>
            <person name="Forrest A.R."/>
            <person name="Zavolan M."/>
            <person name="Davis M.J."/>
            <person name="Wilming L.G."/>
            <person name="Aidinis V."/>
            <person name="Allen J.E."/>
            <person name="Ambesi-Impiombato A."/>
            <person name="Apweiler R."/>
            <person name="Aturaliya R.N."/>
            <person name="Bailey T.L."/>
            <person name="Bansal M."/>
            <person name="Baxter L."/>
            <person name="Beisel K.W."/>
            <person name="Bersano T."/>
            <person name="Bono H."/>
            <person name="Chalk A.M."/>
            <person name="Chiu K.P."/>
            <person name="Choudhary V."/>
            <person name="Christoffels A."/>
            <person name="Clutterbuck D.R."/>
            <person name="Crowe M.L."/>
            <person name="Dalla E."/>
            <person name="Dalrymple B.P."/>
            <person name="de Bono B."/>
            <person name="Della Gatta G."/>
            <person name="di Bernardo D."/>
            <person name="Down T."/>
            <person name="Engstrom P."/>
            <person name="Fagiolini M."/>
            <person name="Faulkner G."/>
            <person name="Fletcher C.F."/>
            <person name="Fukushima T."/>
            <person name="Furuno M."/>
            <person name="Futaki S."/>
            <person name="Gariboldi M."/>
            <person name="Georgii-Hemming P."/>
            <person name="Gingeras T.R."/>
            <person name="Gojobori T."/>
            <person name="Green R.E."/>
            <person name="Gustincich S."/>
            <person name="Harbers M."/>
            <person name="Hayashi Y."/>
            <person name="Hensch T.K."/>
            <person name="Hirokawa N."/>
            <person name="Hill D."/>
            <person name="Huminiecki L."/>
            <person name="Iacono M."/>
            <person name="Ikeo K."/>
            <person name="Iwama A."/>
            <person name="Ishikawa T."/>
            <person name="Jakt M."/>
            <person name="Kanapin A."/>
            <person name="Katoh M."/>
            <person name="Kawasawa Y."/>
            <person name="Kelso J."/>
            <person name="Kitamura H."/>
            <person name="Kitano H."/>
            <person name="Kollias G."/>
            <person name="Krishnan S.P."/>
            <person name="Kruger A."/>
            <person name="Kummerfeld S.K."/>
            <person name="Kurochkin I.V."/>
            <person name="Lareau L.F."/>
            <person name="Lazarevic D."/>
            <person name="Lipovich L."/>
            <person name="Liu J."/>
            <person name="Liuni S."/>
            <person name="McWilliam S."/>
            <person name="Madan Babu M."/>
            <person name="Madera M."/>
            <person name="Marchionni L."/>
            <person name="Matsuda H."/>
            <person name="Matsuzawa S."/>
            <person name="Miki H."/>
            <person name="Mignone F."/>
            <person name="Miyake S."/>
            <person name="Morris K."/>
            <person name="Mottagui-Tabar S."/>
            <person name="Mulder N."/>
            <person name="Nakano N."/>
            <person name="Nakauchi H."/>
            <person name="Ng P."/>
            <person name="Nilsson R."/>
            <person name="Nishiguchi S."/>
            <person name="Nishikawa S."/>
            <person name="Nori F."/>
            <person name="Ohara O."/>
            <person name="Okazaki Y."/>
            <person name="Orlando V."/>
            <person name="Pang K.C."/>
            <person name="Pavan W.J."/>
            <person name="Pavesi G."/>
            <person name="Pesole G."/>
            <person name="Petrovsky N."/>
            <person name="Piazza S."/>
            <person name="Reed J."/>
            <person name="Reid J.F."/>
            <person name="Ring B.Z."/>
            <person name="Ringwald M."/>
            <person name="Rost B."/>
            <person name="Ruan Y."/>
            <person name="Salzberg S.L."/>
            <person name="Sandelin A."/>
            <person name="Schneider C."/>
            <person name="Schoenbach C."/>
            <person name="Sekiguchi K."/>
            <person name="Semple C.A."/>
            <person name="Seno S."/>
            <person name="Sessa L."/>
            <person name="Sheng Y."/>
            <person name="Shibata Y."/>
            <person name="Shimada H."/>
            <person name="Shimada K."/>
            <person name="Silva D."/>
            <person name="Sinclair B."/>
            <person name="Sperling S."/>
            <person name="Stupka E."/>
            <person name="Sugiura K."/>
            <person name="Sultana R."/>
            <person name="Takenaka Y."/>
            <person name="Taki K."/>
            <person name="Tammoja K."/>
            <person name="Tan S.L."/>
            <person name="Tang S."/>
            <person name="Taylor M.S."/>
            <person name="Tegner J."/>
            <person name="Teichmann S.A."/>
            <person name="Ueda H.R."/>
            <person name="van Nimwegen E."/>
            <person name="Verardo R."/>
            <person name="Wei C.L."/>
            <person name="Yagi K."/>
            <person name="Yamanishi H."/>
            <person name="Zabarovsky E."/>
            <person name="Zhu S."/>
            <person name="Zimmer A."/>
            <person name="Hide W."/>
            <person name="Bult C."/>
            <person name="Grimmond S.M."/>
            <person name="Teasdale R.D."/>
            <person name="Liu E.T."/>
            <person name="Brusic V."/>
            <person name="Quackenbush J."/>
            <person name="Wahlestedt C."/>
            <person name="Mattick J.S."/>
            <person name="Hume D.A."/>
            <person name="Kai C."/>
            <person name="Sasaki D."/>
            <person name="Tomaru Y."/>
            <person name="Fukuda S."/>
            <person name="Kanamori-Katayama M."/>
            <person name="Suzuki M."/>
            <person name="Aoki J."/>
            <person name="Arakawa T."/>
            <person name="Iida J."/>
            <person name="Imamura K."/>
            <person name="Itoh M."/>
            <person name="Kato T."/>
            <person name="Kawaji H."/>
            <person name="Kawagashira N."/>
            <person name="Kawashima T."/>
            <person name="Kojima M."/>
            <person name="Kondo S."/>
            <person name="Konno H."/>
            <person name="Nakano K."/>
            <person name="Ninomiya N."/>
            <person name="Nishio T."/>
            <person name="Okada M."/>
            <person name="Plessy C."/>
            <person name="Shibata K."/>
            <person name="Shiraki T."/>
            <person name="Suzuki S."/>
            <person name="Tagami M."/>
            <person name="Waki K."/>
            <person name="Watahiki A."/>
            <person name="Okamura-Oho Y."/>
            <person name="Suzuki H."/>
            <person name="Kawai J."/>
            <person name="Hayashizaki Y."/>
        </authorList>
    </citation>
    <scope>NUCLEOTIDE SEQUENCE [LARGE SCALE MRNA]</scope>
    <source>
        <strain>C57BL/6J</strain>
        <tissue>Testis</tissue>
    </source>
</reference>
<reference key="2">
    <citation type="journal article" date="2004" name="Genome Res.">
        <title>The status, quality, and expansion of the NIH full-length cDNA project: the Mammalian Gene Collection (MGC).</title>
        <authorList>
            <consortium name="The MGC Project Team"/>
        </authorList>
    </citation>
    <scope>NUCLEOTIDE SEQUENCE [LARGE SCALE MRNA]</scope>
    <source>
        <strain>FVB/N</strain>
        <tissue>Mammary tumor</tissue>
    </source>
</reference>
<proteinExistence type="evidence at transcript level"/>
<dbReference type="EC" id="2.1.1.-" evidence="1"/>
<dbReference type="EMBL" id="AK016154">
    <property type="protein sequence ID" value="BAB30128.1"/>
    <property type="molecule type" value="mRNA"/>
</dbReference>
<dbReference type="EMBL" id="BC016225">
    <property type="protein sequence ID" value="AAH16225.1"/>
    <property type="molecule type" value="mRNA"/>
</dbReference>
<dbReference type="CCDS" id="CCDS37202.1"/>
<dbReference type="RefSeq" id="NP_083512.2">
    <property type="nucleotide sequence ID" value="NM_029236.2"/>
</dbReference>
<dbReference type="SMR" id="Q91YP1"/>
<dbReference type="FunCoup" id="Q91YP1">
    <property type="interactions" value="3013"/>
</dbReference>
<dbReference type="STRING" id="10090.ENSMUSP00000041809"/>
<dbReference type="PhosphoSitePlus" id="Q91YP1"/>
<dbReference type="PaxDb" id="10090-ENSMUSP00000041809"/>
<dbReference type="ProteomicsDB" id="265449"/>
<dbReference type="Pumba" id="Q91YP1"/>
<dbReference type="Antibodypedia" id="49296">
    <property type="antibodies" value="47 antibodies from 15 providers"/>
</dbReference>
<dbReference type="DNASU" id="75284"/>
<dbReference type="Ensembl" id="ENSMUST00000040313.6">
    <property type="protein sequence ID" value="ENSMUSP00000041809.5"/>
    <property type="gene ID" value="ENSMUSG00000037525.6"/>
</dbReference>
<dbReference type="GeneID" id="75284"/>
<dbReference type="KEGG" id="mmu:75284"/>
<dbReference type="UCSC" id="uc007xpo.2">
    <property type="organism name" value="mouse"/>
</dbReference>
<dbReference type="AGR" id="MGI:1922534"/>
<dbReference type="CTD" id="144233"/>
<dbReference type="MGI" id="MGI:1922534">
    <property type="gene designation" value="Bcdin3d"/>
</dbReference>
<dbReference type="VEuPathDB" id="HostDB:ENSMUSG00000037525"/>
<dbReference type="eggNOG" id="KOG2899">
    <property type="taxonomic scope" value="Eukaryota"/>
</dbReference>
<dbReference type="GeneTree" id="ENSGT00940000153993"/>
<dbReference type="HOGENOM" id="CLU_082749_0_0_1"/>
<dbReference type="InParanoid" id="Q91YP1"/>
<dbReference type="OMA" id="LNHHDQG"/>
<dbReference type="OrthoDB" id="273070at2759"/>
<dbReference type="PhylomeDB" id="Q91YP1"/>
<dbReference type="TreeFam" id="TF324061"/>
<dbReference type="BioGRID-ORCS" id="75284">
    <property type="hits" value="3 hits in 77 CRISPR screens"/>
</dbReference>
<dbReference type="ChiTaRS" id="Bcdin3d">
    <property type="organism name" value="mouse"/>
</dbReference>
<dbReference type="PRO" id="PR:Q91YP1"/>
<dbReference type="Proteomes" id="UP000000589">
    <property type="component" value="Chromosome 15"/>
</dbReference>
<dbReference type="RNAct" id="Q91YP1">
    <property type="molecule type" value="protein"/>
</dbReference>
<dbReference type="Bgee" id="ENSMUSG00000037525">
    <property type="expression patterns" value="Expressed in ear vesicle and 163 other cell types or tissues"/>
</dbReference>
<dbReference type="GO" id="GO:0005737">
    <property type="term" value="C:cytoplasm"/>
    <property type="evidence" value="ECO:0000250"/>
    <property type="project" value="UniProtKB"/>
</dbReference>
<dbReference type="GO" id="GO:0005829">
    <property type="term" value="C:cytosol"/>
    <property type="evidence" value="ECO:0007669"/>
    <property type="project" value="Ensembl"/>
</dbReference>
<dbReference type="GO" id="GO:0005654">
    <property type="term" value="C:nucleoplasm"/>
    <property type="evidence" value="ECO:0007669"/>
    <property type="project" value="Ensembl"/>
</dbReference>
<dbReference type="GO" id="GO:0005886">
    <property type="term" value="C:plasma membrane"/>
    <property type="evidence" value="ECO:0007669"/>
    <property type="project" value="Ensembl"/>
</dbReference>
<dbReference type="GO" id="GO:0070883">
    <property type="term" value="F:pre-miRNA binding"/>
    <property type="evidence" value="ECO:0007669"/>
    <property type="project" value="Ensembl"/>
</dbReference>
<dbReference type="GO" id="GO:0008173">
    <property type="term" value="F:RNA methyltransferase activity"/>
    <property type="evidence" value="ECO:0000250"/>
    <property type="project" value="UniProtKB"/>
</dbReference>
<dbReference type="GO" id="GO:0090486">
    <property type="term" value="F:small RNA 2'-O-methyltransferase activity"/>
    <property type="evidence" value="ECO:0000250"/>
    <property type="project" value="UniProtKB"/>
</dbReference>
<dbReference type="GO" id="GO:0008175">
    <property type="term" value="F:tRNA methyltransferase activity"/>
    <property type="evidence" value="ECO:0000250"/>
    <property type="project" value="UniProtKB"/>
</dbReference>
<dbReference type="GO" id="GO:2000632">
    <property type="term" value="P:negative regulation of pre-miRNA processing"/>
    <property type="evidence" value="ECO:0000250"/>
    <property type="project" value="UniProtKB"/>
</dbReference>
<dbReference type="GO" id="GO:0031054">
    <property type="term" value="P:pre-miRNA processing"/>
    <property type="evidence" value="ECO:0007669"/>
    <property type="project" value="Ensembl"/>
</dbReference>
<dbReference type="GO" id="GO:0030488">
    <property type="term" value="P:tRNA methylation"/>
    <property type="evidence" value="ECO:0000250"/>
    <property type="project" value="UniProtKB"/>
</dbReference>
<dbReference type="FunFam" id="3.40.50.150:FF:000138">
    <property type="entry name" value="BCDIN3 domain containing RNA methyltransferase"/>
    <property type="match status" value="1"/>
</dbReference>
<dbReference type="Gene3D" id="3.40.50.150">
    <property type="entry name" value="Vaccinia Virus protein VP39"/>
    <property type="match status" value="1"/>
</dbReference>
<dbReference type="InterPro" id="IPR039772">
    <property type="entry name" value="Bin3-like"/>
</dbReference>
<dbReference type="InterPro" id="IPR010675">
    <property type="entry name" value="Bin3_C"/>
</dbReference>
<dbReference type="InterPro" id="IPR024160">
    <property type="entry name" value="BIN3_SAM-bd_dom"/>
</dbReference>
<dbReference type="InterPro" id="IPR029063">
    <property type="entry name" value="SAM-dependent_MTases_sf"/>
</dbReference>
<dbReference type="PANTHER" id="PTHR12315">
    <property type="entry name" value="BICOID-INTERACTING PROTEIN RELATED"/>
    <property type="match status" value="1"/>
</dbReference>
<dbReference type="PANTHER" id="PTHR12315:SF1">
    <property type="entry name" value="RNA 5'-MONOPHOSPHATE METHYLTRANSFERASE"/>
    <property type="match status" value="1"/>
</dbReference>
<dbReference type="Pfam" id="PF06859">
    <property type="entry name" value="Bin3"/>
    <property type="match status" value="1"/>
</dbReference>
<dbReference type="SUPFAM" id="SSF53335">
    <property type="entry name" value="S-adenosyl-L-methionine-dependent methyltransferases"/>
    <property type="match status" value="1"/>
</dbReference>
<dbReference type="PROSITE" id="PS51515">
    <property type="entry name" value="BIN3_SAM"/>
    <property type="match status" value="1"/>
</dbReference>
<keyword id="KW-0963">Cytoplasm</keyword>
<keyword id="KW-0489">Methyltransferase</keyword>
<keyword id="KW-1185">Reference proteome</keyword>
<keyword id="KW-0949">S-adenosyl-L-methionine</keyword>
<keyword id="KW-0808">Transferase</keyword>
<name>BN3D2_MOUSE</name>
<evidence type="ECO:0000250" key="1">
    <source>
        <dbReference type="UniProtKB" id="Q7Z5W3"/>
    </source>
</evidence>
<evidence type="ECO:0000255" key="2">
    <source>
        <dbReference type="PROSITE-ProRule" id="PRU00848"/>
    </source>
</evidence>
<evidence type="ECO:0000305" key="3"/>
<evidence type="ECO:0000312" key="4">
    <source>
        <dbReference type="MGI" id="MGI:1922534"/>
    </source>
</evidence>